<sequence length="148" mass="16540">MFQGETAITLDDKGRMVVPAVYRDLIARMSANRLVLTYNPFEAGCLWLYVEKEWERVRDELMVKPNAHRVVRVLQQKLVGSSALLELDANGRISVPSSHRSAVAIGKKAVLLGMGDKFELWSEQAHHALIQQTLSDGDLGDGLLDLRL</sequence>
<proteinExistence type="inferred from homology"/>
<comment type="subunit">
    <text evidence="1">Forms oligomers.</text>
</comment>
<comment type="subcellular location">
    <subcellularLocation>
        <location evidence="1">Cytoplasm</location>
        <location evidence="1">Nucleoid</location>
    </subcellularLocation>
</comment>
<comment type="similarity">
    <text evidence="1">Belongs to the MraZ family.</text>
</comment>
<comment type="sequence caution" evidence="3">
    <conflict type="erroneous initiation">
        <sequence resource="EMBL-CDS" id="AAF83599"/>
    </conflict>
</comment>
<name>MRAZ_XYLFA</name>
<accession>Q9PF89</accession>
<dbReference type="EMBL" id="AE003849">
    <property type="protein sequence ID" value="AAF83599.1"/>
    <property type="status" value="ALT_INIT"/>
    <property type="molecule type" value="Genomic_DNA"/>
</dbReference>
<dbReference type="PIR" id="D82762">
    <property type="entry name" value="D82762"/>
</dbReference>
<dbReference type="SMR" id="Q9PF89"/>
<dbReference type="STRING" id="160492.XF_0789"/>
<dbReference type="KEGG" id="xfa:XF_0789"/>
<dbReference type="eggNOG" id="COG2001">
    <property type="taxonomic scope" value="Bacteria"/>
</dbReference>
<dbReference type="HOGENOM" id="CLU_107907_2_0_6"/>
<dbReference type="Proteomes" id="UP000000812">
    <property type="component" value="Chromosome"/>
</dbReference>
<dbReference type="GO" id="GO:0005737">
    <property type="term" value="C:cytoplasm"/>
    <property type="evidence" value="ECO:0007669"/>
    <property type="project" value="UniProtKB-UniRule"/>
</dbReference>
<dbReference type="GO" id="GO:0009295">
    <property type="term" value="C:nucleoid"/>
    <property type="evidence" value="ECO:0007669"/>
    <property type="project" value="UniProtKB-SubCell"/>
</dbReference>
<dbReference type="GO" id="GO:0003700">
    <property type="term" value="F:DNA-binding transcription factor activity"/>
    <property type="evidence" value="ECO:0007669"/>
    <property type="project" value="UniProtKB-UniRule"/>
</dbReference>
<dbReference type="GO" id="GO:0000976">
    <property type="term" value="F:transcription cis-regulatory region binding"/>
    <property type="evidence" value="ECO:0007669"/>
    <property type="project" value="TreeGrafter"/>
</dbReference>
<dbReference type="GO" id="GO:2000143">
    <property type="term" value="P:negative regulation of DNA-templated transcription initiation"/>
    <property type="evidence" value="ECO:0007669"/>
    <property type="project" value="TreeGrafter"/>
</dbReference>
<dbReference type="CDD" id="cd16321">
    <property type="entry name" value="MraZ_C"/>
    <property type="match status" value="1"/>
</dbReference>
<dbReference type="CDD" id="cd16320">
    <property type="entry name" value="MraZ_N"/>
    <property type="match status" value="1"/>
</dbReference>
<dbReference type="Gene3D" id="3.40.1550.20">
    <property type="entry name" value="Transcriptional regulator MraZ domain"/>
    <property type="match status" value="1"/>
</dbReference>
<dbReference type="HAMAP" id="MF_01008">
    <property type="entry name" value="MraZ"/>
    <property type="match status" value="1"/>
</dbReference>
<dbReference type="InterPro" id="IPR003444">
    <property type="entry name" value="MraZ"/>
</dbReference>
<dbReference type="InterPro" id="IPR035644">
    <property type="entry name" value="MraZ_C"/>
</dbReference>
<dbReference type="InterPro" id="IPR020603">
    <property type="entry name" value="MraZ_dom"/>
</dbReference>
<dbReference type="InterPro" id="IPR035642">
    <property type="entry name" value="MraZ_N"/>
</dbReference>
<dbReference type="InterPro" id="IPR038619">
    <property type="entry name" value="MraZ_sf"/>
</dbReference>
<dbReference type="InterPro" id="IPR007159">
    <property type="entry name" value="SpoVT-AbrB_dom"/>
</dbReference>
<dbReference type="InterPro" id="IPR037914">
    <property type="entry name" value="SpoVT-AbrB_sf"/>
</dbReference>
<dbReference type="PANTHER" id="PTHR34701">
    <property type="entry name" value="TRANSCRIPTIONAL REGULATOR MRAZ"/>
    <property type="match status" value="1"/>
</dbReference>
<dbReference type="PANTHER" id="PTHR34701:SF1">
    <property type="entry name" value="TRANSCRIPTIONAL REGULATOR MRAZ"/>
    <property type="match status" value="1"/>
</dbReference>
<dbReference type="Pfam" id="PF02381">
    <property type="entry name" value="MraZ"/>
    <property type="match status" value="2"/>
</dbReference>
<dbReference type="SUPFAM" id="SSF89447">
    <property type="entry name" value="AbrB/MazE/MraZ-like"/>
    <property type="match status" value="1"/>
</dbReference>
<dbReference type="PROSITE" id="PS51740">
    <property type="entry name" value="SPOVT_ABRB"/>
    <property type="match status" value="2"/>
</dbReference>
<keyword id="KW-0963">Cytoplasm</keyword>
<keyword id="KW-0238">DNA-binding</keyword>
<keyword id="KW-0677">Repeat</keyword>
<keyword id="KW-0804">Transcription</keyword>
<keyword id="KW-0805">Transcription regulation</keyword>
<reference key="1">
    <citation type="journal article" date="2000" name="Nature">
        <title>The genome sequence of the plant pathogen Xylella fastidiosa.</title>
        <authorList>
            <person name="Simpson A.J.G."/>
            <person name="Reinach F.C."/>
            <person name="Arruda P."/>
            <person name="Abreu F.A."/>
            <person name="Acencio M."/>
            <person name="Alvarenga R."/>
            <person name="Alves L.M.C."/>
            <person name="Araya J.E."/>
            <person name="Baia G.S."/>
            <person name="Baptista C.S."/>
            <person name="Barros M.H."/>
            <person name="Bonaccorsi E.D."/>
            <person name="Bordin S."/>
            <person name="Bove J.M."/>
            <person name="Briones M.R.S."/>
            <person name="Bueno M.R.P."/>
            <person name="Camargo A.A."/>
            <person name="Camargo L.E.A."/>
            <person name="Carraro D.M."/>
            <person name="Carrer H."/>
            <person name="Colauto N.B."/>
            <person name="Colombo C."/>
            <person name="Costa F.F."/>
            <person name="Costa M.C.R."/>
            <person name="Costa-Neto C.M."/>
            <person name="Coutinho L.L."/>
            <person name="Cristofani M."/>
            <person name="Dias-Neto E."/>
            <person name="Docena C."/>
            <person name="El-Dorry H."/>
            <person name="Facincani A.P."/>
            <person name="Ferreira A.J.S."/>
            <person name="Ferreira V.C.A."/>
            <person name="Ferro J.A."/>
            <person name="Fraga J.S."/>
            <person name="Franca S.C."/>
            <person name="Franco M.C."/>
            <person name="Frohme M."/>
            <person name="Furlan L.R."/>
            <person name="Garnier M."/>
            <person name="Goldman G.H."/>
            <person name="Goldman M.H.S."/>
            <person name="Gomes S.L."/>
            <person name="Gruber A."/>
            <person name="Ho P.L."/>
            <person name="Hoheisel J.D."/>
            <person name="Junqueira M.L."/>
            <person name="Kemper E.L."/>
            <person name="Kitajima J.P."/>
            <person name="Krieger J.E."/>
            <person name="Kuramae E.E."/>
            <person name="Laigret F."/>
            <person name="Lambais M.R."/>
            <person name="Leite L.C.C."/>
            <person name="Lemos E.G.M."/>
            <person name="Lemos M.V.F."/>
            <person name="Lopes S.A."/>
            <person name="Lopes C.R."/>
            <person name="Machado J.A."/>
            <person name="Machado M.A."/>
            <person name="Madeira A.M.B.N."/>
            <person name="Madeira H.M.F."/>
            <person name="Marino C.L."/>
            <person name="Marques M.V."/>
            <person name="Martins E.A.L."/>
            <person name="Martins E.M.F."/>
            <person name="Matsukuma A.Y."/>
            <person name="Menck C.F.M."/>
            <person name="Miracca E.C."/>
            <person name="Miyaki C.Y."/>
            <person name="Monteiro-Vitorello C.B."/>
            <person name="Moon D.H."/>
            <person name="Nagai M.A."/>
            <person name="Nascimento A.L.T.O."/>
            <person name="Netto L.E.S."/>
            <person name="Nhani A. Jr."/>
            <person name="Nobrega F.G."/>
            <person name="Nunes L.R."/>
            <person name="Oliveira M.A."/>
            <person name="de Oliveira M.C."/>
            <person name="de Oliveira R.C."/>
            <person name="Palmieri D.A."/>
            <person name="Paris A."/>
            <person name="Peixoto B.R."/>
            <person name="Pereira G.A.G."/>
            <person name="Pereira H.A. Jr."/>
            <person name="Pesquero J.B."/>
            <person name="Quaggio R.B."/>
            <person name="Roberto P.G."/>
            <person name="Rodrigues V."/>
            <person name="de Rosa A.J.M."/>
            <person name="de Rosa V.E. Jr."/>
            <person name="de Sa R.G."/>
            <person name="Santelli R.V."/>
            <person name="Sawasaki H.E."/>
            <person name="da Silva A.C.R."/>
            <person name="da Silva A.M."/>
            <person name="da Silva F.R."/>
            <person name="Silva W.A. Jr."/>
            <person name="da Silveira J.F."/>
            <person name="Silvestri M.L.Z."/>
            <person name="Siqueira W.J."/>
            <person name="de Souza A.A."/>
            <person name="de Souza A.P."/>
            <person name="Terenzi M.F."/>
            <person name="Truffi D."/>
            <person name="Tsai S.M."/>
            <person name="Tsuhako M.H."/>
            <person name="Vallada H."/>
            <person name="Van Sluys M.A."/>
            <person name="Verjovski-Almeida S."/>
            <person name="Vettore A.L."/>
            <person name="Zago M.A."/>
            <person name="Zatz M."/>
            <person name="Meidanis J."/>
            <person name="Setubal J.C."/>
        </authorList>
    </citation>
    <scope>NUCLEOTIDE SEQUENCE [LARGE SCALE GENOMIC DNA]</scope>
    <source>
        <strain>9a5c</strain>
    </source>
</reference>
<protein>
    <recommendedName>
        <fullName>Transcriptional regulator MraZ</fullName>
    </recommendedName>
</protein>
<organism>
    <name type="scientific">Xylella fastidiosa (strain 9a5c)</name>
    <dbReference type="NCBI Taxonomy" id="160492"/>
    <lineage>
        <taxon>Bacteria</taxon>
        <taxon>Pseudomonadati</taxon>
        <taxon>Pseudomonadota</taxon>
        <taxon>Gammaproteobacteria</taxon>
        <taxon>Lysobacterales</taxon>
        <taxon>Lysobacteraceae</taxon>
        <taxon>Xylella</taxon>
    </lineage>
</organism>
<evidence type="ECO:0000255" key="1">
    <source>
        <dbReference type="HAMAP-Rule" id="MF_01008"/>
    </source>
</evidence>
<evidence type="ECO:0000255" key="2">
    <source>
        <dbReference type="PROSITE-ProRule" id="PRU01076"/>
    </source>
</evidence>
<evidence type="ECO:0000305" key="3"/>
<feature type="chain" id="PRO_0000108559" description="Transcriptional regulator MraZ">
    <location>
        <begin position="1"/>
        <end position="148"/>
    </location>
</feature>
<feature type="domain" description="SpoVT-AbrB 1" evidence="2">
    <location>
        <begin position="5"/>
        <end position="53"/>
    </location>
</feature>
<feature type="domain" description="SpoVT-AbrB 2" evidence="2">
    <location>
        <begin position="82"/>
        <end position="125"/>
    </location>
</feature>
<gene>
    <name evidence="1" type="primary">mraZ</name>
    <name type="ordered locus">XF_0789</name>
</gene>